<gene>
    <name evidence="7" type="primary">phomO</name>
</gene>
<dbReference type="EMBL" id="LC646903">
    <property type="protein sequence ID" value="BDA39144.1"/>
    <property type="molecule type" value="Genomic_DNA"/>
</dbReference>
<dbReference type="SMR" id="A0A8J9WHR9"/>
<dbReference type="GO" id="GO:0016020">
    <property type="term" value="C:membrane"/>
    <property type="evidence" value="ECO:0007669"/>
    <property type="project" value="UniProtKB-SubCell"/>
</dbReference>
<dbReference type="GO" id="GO:0140359">
    <property type="term" value="F:ABC-type transporter activity"/>
    <property type="evidence" value="ECO:0007669"/>
    <property type="project" value="InterPro"/>
</dbReference>
<dbReference type="GO" id="GO:0005524">
    <property type="term" value="F:ATP binding"/>
    <property type="evidence" value="ECO:0007669"/>
    <property type="project" value="UniProtKB-KW"/>
</dbReference>
<dbReference type="GO" id="GO:0016887">
    <property type="term" value="F:ATP hydrolysis activity"/>
    <property type="evidence" value="ECO:0007669"/>
    <property type="project" value="InterPro"/>
</dbReference>
<dbReference type="CDD" id="cd18579">
    <property type="entry name" value="ABC_6TM_ABCC_D1"/>
    <property type="match status" value="1"/>
</dbReference>
<dbReference type="CDD" id="cd18580">
    <property type="entry name" value="ABC_6TM_ABCC_D2"/>
    <property type="match status" value="1"/>
</dbReference>
<dbReference type="FunFam" id="1.20.1560.10:FF:000055">
    <property type="entry name" value="ABC multidrug transporter (Eurofung)"/>
    <property type="match status" value="1"/>
</dbReference>
<dbReference type="FunFam" id="1.20.1560.10:FF:000066">
    <property type="entry name" value="ABC multidrug transporter (Eurofung)"/>
    <property type="match status" value="1"/>
</dbReference>
<dbReference type="Gene3D" id="1.20.1560.10">
    <property type="entry name" value="ABC transporter type 1, transmembrane domain"/>
    <property type="match status" value="2"/>
</dbReference>
<dbReference type="Gene3D" id="3.40.50.300">
    <property type="entry name" value="P-loop containing nucleotide triphosphate hydrolases"/>
    <property type="match status" value="2"/>
</dbReference>
<dbReference type="InterPro" id="IPR003593">
    <property type="entry name" value="AAA+_ATPase"/>
</dbReference>
<dbReference type="InterPro" id="IPR011527">
    <property type="entry name" value="ABC1_TM_dom"/>
</dbReference>
<dbReference type="InterPro" id="IPR036640">
    <property type="entry name" value="ABC1_TM_sf"/>
</dbReference>
<dbReference type="InterPro" id="IPR003439">
    <property type="entry name" value="ABC_transporter-like_ATP-bd"/>
</dbReference>
<dbReference type="InterPro" id="IPR017871">
    <property type="entry name" value="ABC_transporter-like_CS"/>
</dbReference>
<dbReference type="InterPro" id="IPR050173">
    <property type="entry name" value="ABC_transporter_C-like"/>
</dbReference>
<dbReference type="InterPro" id="IPR044746">
    <property type="entry name" value="ABCC_6TM_D1"/>
</dbReference>
<dbReference type="InterPro" id="IPR044726">
    <property type="entry name" value="ABCC_6TM_D2"/>
</dbReference>
<dbReference type="InterPro" id="IPR027417">
    <property type="entry name" value="P-loop_NTPase"/>
</dbReference>
<dbReference type="PANTHER" id="PTHR24223:SF399">
    <property type="entry name" value="ABC TRANSPORTER ATNG"/>
    <property type="match status" value="1"/>
</dbReference>
<dbReference type="PANTHER" id="PTHR24223">
    <property type="entry name" value="ATP-BINDING CASSETTE SUB-FAMILY C"/>
    <property type="match status" value="1"/>
</dbReference>
<dbReference type="Pfam" id="PF00664">
    <property type="entry name" value="ABC_membrane"/>
    <property type="match status" value="2"/>
</dbReference>
<dbReference type="Pfam" id="PF00005">
    <property type="entry name" value="ABC_tran"/>
    <property type="match status" value="2"/>
</dbReference>
<dbReference type="SMART" id="SM00382">
    <property type="entry name" value="AAA"/>
    <property type="match status" value="2"/>
</dbReference>
<dbReference type="SUPFAM" id="SSF90123">
    <property type="entry name" value="ABC transporter transmembrane region"/>
    <property type="match status" value="2"/>
</dbReference>
<dbReference type="SUPFAM" id="SSF52540">
    <property type="entry name" value="P-loop containing nucleoside triphosphate hydrolases"/>
    <property type="match status" value="2"/>
</dbReference>
<dbReference type="PROSITE" id="PS50929">
    <property type="entry name" value="ABC_TM1F"/>
    <property type="match status" value="2"/>
</dbReference>
<dbReference type="PROSITE" id="PS00211">
    <property type="entry name" value="ABC_TRANSPORTER_1"/>
    <property type="match status" value="1"/>
</dbReference>
<dbReference type="PROSITE" id="PS50893">
    <property type="entry name" value="ABC_TRANSPORTER_2"/>
    <property type="match status" value="2"/>
</dbReference>
<sequence length="1551" mass="166419">MASSAPSSSSCTFQAESSFGPAVASCRRAFDFTLYFEEVVFVLVPSCVFILLAATRLLFILRRARRFTTATAATTTSTDTSSSHSCGNAAQNQHTPIGHGLAHHHILQQCTAGLLVTLHVAGLILLCTTVPSRQRTDLSVPASVVAALAFGVVPVLAHFEHKRRRPSSGPRSSSLLVGLFLCVAVLLRAPLVRTHAALYGSGSALVAVEIASLVLQLVLIAVGEVSSWAADATSNFSPEESAGFLGRSFGSWLWGTFVTGYRTTLSLDSLVPIDSSLESRIVATSFDHILPVSPSGKPGKNGQYRLLLALFRSLGLYALAPVIPRLCLAGFTLAQPFLASATINYIGNGPAPDRDGYGLIGATFLIYTGIAVSTGWYWSLSYKNVTKIRGGLVDGVSQKMLRLSQQHGTESKVLTMMINDVYRITSTLAYAHELWVAPIETAIGTWMLCRHVGPPGLVVLGIIGVCLGASTYVGKHMAIQQGVWLAAVERRIGATKKMLASIKAIKMMGAGPSVAEALERLRRLEFAASRKFRALIVGTLLSSYSTATLAPVLVFGTYIGATTAAADFSASTLFTSLIWISLLASPLIQLLQIIPSFGAALGSLERIDAFFEKQEFTDERDEATAVDSSCSEKGEKKKEHVSLSIHNSSFSYTDDSEDSILKDVNLVINRGQHVVVTGPAGCGKSLLLQAILGEVAPQNSGSRVCVDGKVAFCSQTPWLENLSARQVVSRFSRDKDPSWTDRVVDACELREFLEAQDPDATIGSQGSALARAIQSRPDILLLDDVLSPIDYVTKKRILRQLFGKSGILHETGTTVFQVTQDHAVAQLADIVLRLDETGALRPYQFPPSQADVEDENGDVDNGAENTRPRESSHTTEAQSGPPEPKSKPTEITDRKVYATYFESIGFLNLVLFIGGGIIFAFCLKFPNVWVGWWTADSSDPDEASHNIGYWFGIYAMLNVLPLIAVAGWVAQLMMLIVPLSGSKLHRKLVDTVSKATFSFISRVDTGSLLNRFNQDLMFVDSRLPLDLFNTAAALLTGIAQVILIGVSAVYVLASIPVLAAVLFLLQHFYLRTSKQLRHLDLQSKAELHTRLSESYQGLATIRAARWQRQVHAEFQAGLDRSQAPVYLLWTVQTWLKLVLNLVVAGLALVVMGAAVGLHQHGSSSGASASASGIGIAFLNLTTLGETMTNLLTAWTSLETTLGAIARMVSFSRDTPAERDVLVRPDSLDHGGGGGGDRAEPPESWPESGGIKLEGVWATYDDDDESDENTDDSGGRPATDVAADGEKHEATTITTTSSTMTTTRYALQDISLEVRPGERVAVCGRTGSGKSTLLLALLGLVAVRRGRISIDGRDVAGVPRARLRGAVHVIPQDPFISVASGNGETIREALDPAGKLGDEEVTDVLQDCGVLDKIVGAGGLAASVSDEALSLSAGERQLFVLARLICRAGGRCRHGGGGILLLDEATSSLDVNTDGKTAEVLRKWLPNMTVLSVLHRLEAALKYDRVVVLEGGRVAHVVTPSESTVSSDIFAFFGRSRSFLESRETGGVSWLE</sequence>
<comment type="function">
    <text evidence="6">ABC-type transporter; part of the gene cluster that mediates the biosynthesis of the phomopsins, a group of hexapeptide mycotoxins which infects lupins and causes lupinosis disease in livestock.</text>
</comment>
<comment type="subcellular location">
    <subcellularLocation>
        <location evidence="1">Membrane</location>
        <topology evidence="1">Multi-pass membrane protein</topology>
    </subcellularLocation>
</comment>
<comment type="similarity">
    <text evidence="8">Belongs to the ABC transporter superfamily. ABCC family. Conjugate transporter (TC 3.A.1.208) subfamily.</text>
</comment>
<reference key="1">
    <citation type="journal article" date="2021" name="Angew. Chem. Int. Ed.">
        <title>Biosynthetic studies of phomopsins unveil posttranslational installation of dehydroamino acids by ustYa family proteins.</title>
        <authorList>
            <person name="Sogahata K."/>
            <person name="Ozaki T."/>
            <person name="Igarashi Y."/>
            <person name="Naganuma Y."/>
            <person name="Liu C."/>
            <person name="Minami A."/>
            <person name="Oikawa H."/>
        </authorList>
    </citation>
    <scope>NUCLEOTIDE SEQUENCE [GENOMIC DNA]</scope>
    <scope>FUNCTION</scope>
    <source>
        <strain>ATCC 26115 / IMI 115107 / C 1557</strain>
    </source>
</reference>
<name>PHOO1_DIALO</name>
<proteinExistence type="inferred from homology"/>
<organism>
    <name type="scientific">Diaporthe leptostromiformis</name>
    <name type="common">Lupinosis disease fungus</name>
    <name type="synonym">Phomopsis leptostromiformis</name>
    <dbReference type="NCBI Taxonomy" id="291059"/>
    <lineage>
        <taxon>Eukaryota</taxon>
        <taxon>Fungi</taxon>
        <taxon>Dikarya</taxon>
        <taxon>Ascomycota</taxon>
        <taxon>Pezizomycotina</taxon>
        <taxon>Sordariomycetes</taxon>
        <taxon>Sordariomycetidae</taxon>
        <taxon>Diaporthales</taxon>
        <taxon>Diaporthaceae</taxon>
        <taxon>Diaporthe</taxon>
    </lineage>
</organism>
<evidence type="ECO:0000255" key="1"/>
<evidence type="ECO:0000255" key="2">
    <source>
        <dbReference type="PROSITE-ProRule" id="PRU00434"/>
    </source>
</evidence>
<evidence type="ECO:0000255" key="3">
    <source>
        <dbReference type="PROSITE-ProRule" id="PRU00441"/>
    </source>
</evidence>
<evidence type="ECO:0000255" key="4">
    <source>
        <dbReference type="PROSITE-ProRule" id="PRU00498"/>
    </source>
</evidence>
<evidence type="ECO:0000256" key="5">
    <source>
        <dbReference type="SAM" id="MobiDB-lite"/>
    </source>
</evidence>
<evidence type="ECO:0000269" key="6">
    <source>
    </source>
</evidence>
<evidence type="ECO:0000303" key="7">
    <source>
    </source>
</evidence>
<evidence type="ECO:0000305" key="8"/>
<accession>A0A8J9WHR9</accession>
<keyword id="KW-0067">ATP-binding</keyword>
<keyword id="KW-0325">Glycoprotein</keyword>
<keyword id="KW-0472">Membrane</keyword>
<keyword id="KW-0547">Nucleotide-binding</keyword>
<keyword id="KW-0677">Repeat</keyword>
<keyword id="KW-0812">Transmembrane</keyword>
<keyword id="KW-1133">Transmembrane helix</keyword>
<keyword id="KW-0813">Transport</keyword>
<keyword id="KW-0843">Virulence</keyword>
<feature type="chain" id="PRO_0000458385" description="ABC-type transporter phomO">
    <location>
        <begin position="1"/>
        <end position="1551"/>
    </location>
</feature>
<feature type="transmembrane region" description="Helical" evidence="1">
    <location>
        <begin position="34"/>
        <end position="54"/>
    </location>
</feature>
<feature type="transmembrane region" description="Helical" evidence="1">
    <location>
        <begin position="110"/>
        <end position="130"/>
    </location>
</feature>
<feature type="transmembrane region" description="Helical" evidence="1">
    <location>
        <begin position="139"/>
        <end position="159"/>
    </location>
</feature>
<feature type="transmembrane region" description="Helical" evidence="1">
    <location>
        <begin position="172"/>
        <end position="192"/>
    </location>
</feature>
<feature type="transmembrane region" description="Helical" evidence="1">
    <location>
        <begin position="202"/>
        <end position="222"/>
    </location>
</feature>
<feature type="transmembrane region" description="Helical" evidence="1">
    <location>
        <begin position="314"/>
        <end position="334"/>
    </location>
</feature>
<feature type="transmembrane region" description="Helical" evidence="1 3">
    <location>
        <begin position="358"/>
        <end position="378"/>
    </location>
</feature>
<feature type="transmembrane region" description="Helical" evidence="1 3">
    <location>
        <begin position="428"/>
        <end position="448"/>
    </location>
</feature>
<feature type="transmembrane region" description="Helical" evidence="1 3">
    <location>
        <begin position="452"/>
        <end position="472"/>
    </location>
</feature>
<feature type="transmembrane region" description="Helical" evidence="1 3">
    <location>
        <begin position="535"/>
        <end position="555"/>
    </location>
</feature>
<feature type="transmembrane region" description="Helical" evidence="1 3">
    <location>
        <begin position="577"/>
        <end position="597"/>
    </location>
</feature>
<feature type="transmembrane region" description="Helical" evidence="1 3">
    <location>
        <begin position="903"/>
        <end position="923"/>
    </location>
</feature>
<feature type="transmembrane region" description="Helical" evidence="1 3">
    <location>
        <begin position="959"/>
        <end position="979"/>
    </location>
</feature>
<feature type="transmembrane region" description="Helical" evidence="1 3">
    <location>
        <begin position="1027"/>
        <end position="1044"/>
    </location>
</feature>
<feature type="transmembrane region" description="Helical" evidence="1 3">
    <location>
        <begin position="1137"/>
        <end position="1157"/>
    </location>
</feature>
<feature type="domain" description="ABC transmembrane type-1 1" evidence="3">
    <location>
        <begin position="326"/>
        <end position="599"/>
    </location>
</feature>
<feature type="domain" description="ABC transporter 1" evidence="2">
    <location>
        <begin position="645"/>
        <end position="861"/>
    </location>
</feature>
<feature type="domain" description="ABC transmembrane type-1 2" evidence="3">
    <location>
        <begin position="910"/>
        <end position="1199"/>
    </location>
</feature>
<feature type="domain" description="ABC transporter 2" evidence="2">
    <location>
        <begin position="1287"/>
        <end position="1535"/>
    </location>
</feature>
<feature type="region of interest" description="Disordered" evidence="5">
    <location>
        <begin position="843"/>
        <end position="889"/>
    </location>
</feature>
<feature type="region of interest" description="Disordered" evidence="5">
    <location>
        <begin position="1219"/>
        <end position="1296"/>
    </location>
</feature>
<feature type="compositionally biased region" description="Basic and acidic residues" evidence="5">
    <location>
        <begin position="1219"/>
        <end position="1228"/>
    </location>
</feature>
<feature type="compositionally biased region" description="Acidic residues" evidence="5">
    <location>
        <begin position="1259"/>
        <end position="1270"/>
    </location>
</feature>
<feature type="binding site" evidence="2">
    <location>
        <begin position="678"/>
        <end position="685"/>
    </location>
    <ligand>
        <name>ATP</name>
        <dbReference type="ChEBI" id="CHEBI:30616"/>
    </ligand>
</feature>
<feature type="binding site" evidence="2">
    <location>
        <begin position="1323"/>
        <end position="1330"/>
    </location>
    <ligand>
        <name>ATP</name>
        <dbReference type="ChEBI" id="CHEBI:30616"/>
    </ligand>
</feature>
<feature type="glycosylation site" description="N-linked (GlcNAc...) asparagine" evidence="4">
    <location>
        <position position="384"/>
    </location>
</feature>
<feature type="glycosylation site" description="N-linked (GlcNAc...) asparagine" evidence="4">
    <location>
        <position position="647"/>
    </location>
</feature>
<feature type="glycosylation site" description="N-linked (GlcNAc...) asparagine" evidence="4">
    <location>
        <position position="721"/>
    </location>
</feature>
<feature type="glycosylation site" description="N-linked (GlcNAc...) asparagine" evidence="4">
    <location>
        <position position="1179"/>
    </location>
</feature>
<feature type="glycosylation site" description="N-linked (GlcNAc...) asparagine" evidence="4">
    <location>
        <position position="1486"/>
    </location>
</feature>
<protein>
    <recommendedName>
        <fullName evidence="7">ABC-type transporter phomO</fullName>
    </recommendedName>
    <alternativeName>
        <fullName evidence="7">Phomopsin biosynthesis cluster protein O</fullName>
    </alternativeName>
</protein>